<accession>A1KC59</accession>
<comment type="function">
    <text evidence="1">Involved in the maturation of [NiFe] hydrogenases. Required for nickel insertion into the metal center of the hydrogenase.</text>
</comment>
<comment type="similarity">
    <text evidence="1">Belongs to the HypA/HybF family.</text>
</comment>
<organism>
    <name type="scientific">Azoarcus sp. (strain BH72)</name>
    <dbReference type="NCBI Taxonomy" id="418699"/>
    <lineage>
        <taxon>Bacteria</taxon>
        <taxon>Pseudomonadati</taxon>
        <taxon>Pseudomonadota</taxon>
        <taxon>Betaproteobacteria</taxon>
        <taxon>Rhodocyclales</taxon>
        <taxon>Zoogloeaceae</taxon>
        <taxon>Azoarcus</taxon>
    </lineage>
</organism>
<dbReference type="EMBL" id="AM406670">
    <property type="protein sequence ID" value="CAL96415.1"/>
    <property type="molecule type" value="Genomic_DNA"/>
</dbReference>
<dbReference type="RefSeq" id="WP_011767521.1">
    <property type="nucleotide sequence ID" value="NC_008702.1"/>
</dbReference>
<dbReference type="SMR" id="A1KC59"/>
<dbReference type="STRING" id="62928.azo3799"/>
<dbReference type="KEGG" id="aoa:dqs_3951"/>
<dbReference type="KEGG" id="azo:azo3799"/>
<dbReference type="eggNOG" id="COG0375">
    <property type="taxonomic scope" value="Bacteria"/>
</dbReference>
<dbReference type="HOGENOM" id="CLU_126929_0_0_4"/>
<dbReference type="OrthoDB" id="288014at2"/>
<dbReference type="Proteomes" id="UP000002588">
    <property type="component" value="Chromosome"/>
</dbReference>
<dbReference type="GO" id="GO:0016151">
    <property type="term" value="F:nickel cation binding"/>
    <property type="evidence" value="ECO:0007669"/>
    <property type="project" value="UniProtKB-UniRule"/>
</dbReference>
<dbReference type="GO" id="GO:0008270">
    <property type="term" value="F:zinc ion binding"/>
    <property type="evidence" value="ECO:0007669"/>
    <property type="project" value="UniProtKB-UniRule"/>
</dbReference>
<dbReference type="GO" id="GO:0051604">
    <property type="term" value="P:protein maturation"/>
    <property type="evidence" value="ECO:0007669"/>
    <property type="project" value="InterPro"/>
</dbReference>
<dbReference type="GO" id="GO:0036211">
    <property type="term" value="P:protein modification process"/>
    <property type="evidence" value="ECO:0007669"/>
    <property type="project" value="UniProtKB-UniRule"/>
</dbReference>
<dbReference type="Gene3D" id="3.30.2320.80">
    <property type="match status" value="1"/>
</dbReference>
<dbReference type="HAMAP" id="MF_00213">
    <property type="entry name" value="HypA_HybF"/>
    <property type="match status" value="1"/>
</dbReference>
<dbReference type="InterPro" id="IPR020538">
    <property type="entry name" value="Hydgase_Ni_incorp_HypA/HybF_CS"/>
</dbReference>
<dbReference type="InterPro" id="IPR000688">
    <property type="entry name" value="HypA/HybF"/>
</dbReference>
<dbReference type="NCBIfam" id="TIGR00100">
    <property type="entry name" value="hypA"/>
    <property type="match status" value="1"/>
</dbReference>
<dbReference type="PANTHER" id="PTHR34535">
    <property type="entry name" value="HYDROGENASE MATURATION FACTOR HYPA"/>
    <property type="match status" value="1"/>
</dbReference>
<dbReference type="PANTHER" id="PTHR34535:SF3">
    <property type="entry name" value="HYDROGENASE MATURATION FACTOR HYPA"/>
    <property type="match status" value="1"/>
</dbReference>
<dbReference type="Pfam" id="PF01155">
    <property type="entry name" value="HypA"/>
    <property type="match status" value="1"/>
</dbReference>
<dbReference type="PIRSF" id="PIRSF004761">
    <property type="entry name" value="Hydrgn_mat_HypA"/>
    <property type="match status" value="1"/>
</dbReference>
<dbReference type="PROSITE" id="PS01249">
    <property type="entry name" value="HYPA"/>
    <property type="match status" value="1"/>
</dbReference>
<name>HYPA_AZOSB</name>
<proteinExistence type="inferred from homology"/>
<feature type="chain" id="PRO_1000023822" description="Hydrogenase maturation factor HypA">
    <location>
        <begin position="1"/>
        <end position="114"/>
    </location>
</feature>
<feature type="binding site" evidence="1">
    <location>
        <position position="2"/>
    </location>
    <ligand>
        <name>Ni(2+)</name>
        <dbReference type="ChEBI" id="CHEBI:49786"/>
    </ligand>
</feature>
<feature type="binding site" evidence="1">
    <location>
        <position position="73"/>
    </location>
    <ligand>
        <name>Zn(2+)</name>
        <dbReference type="ChEBI" id="CHEBI:29105"/>
    </ligand>
</feature>
<feature type="binding site" evidence="1">
    <location>
        <position position="76"/>
    </location>
    <ligand>
        <name>Zn(2+)</name>
        <dbReference type="ChEBI" id="CHEBI:29105"/>
    </ligand>
</feature>
<feature type="binding site" evidence="1">
    <location>
        <position position="89"/>
    </location>
    <ligand>
        <name>Zn(2+)</name>
        <dbReference type="ChEBI" id="CHEBI:29105"/>
    </ligand>
</feature>
<feature type="binding site" evidence="1">
    <location>
        <position position="92"/>
    </location>
    <ligand>
        <name>Zn(2+)</name>
        <dbReference type="ChEBI" id="CHEBI:29105"/>
    </ligand>
</feature>
<reference key="1">
    <citation type="journal article" date="2006" name="Nat. Biotechnol.">
        <title>Complete genome of the mutualistic, N2-fixing grass endophyte Azoarcus sp. strain BH72.</title>
        <authorList>
            <person name="Krause A."/>
            <person name="Ramakumar A."/>
            <person name="Bartels D."/>
            <person name="Battistoni F."/>
            <person name="Bekel T."/>
            <person name="Boch J."/>
            <person name="Boehm M."/>
            <person name="Friedrich F."/>
            <person name="Hurek T."/>
            <person name="Krause L."/>
            <person name="Linke B."/>
            <person name="McHardy A.C."/>
            <person name="Sarkar A."/>
            <person name="Schneiker S."/>
            <person name="Syed A.A."/>
            <person name="Thauer R."/>
            <person name="Vorhoelter F.-J."/>
            <person name="Weidner S."/>
            <person name="Puehler A."/>
            <person name="Reinhold-Hurek B."/>
            <person name="Kaiser O."/>
            <person name="Goesmann A."/>
        </authorList>
    </citation>
    <scope>NUCLEOTIDE SEQUENCE [LARGE SCALE GENOMIC DNA]</scope>
    <source>
        <strain>BH72</strain>
    </source>
</reference>
<protein>
    <recommendedName>
        <fullName evidence="1">Hydrogenase maturation factor HypA</fullName>
    </recommendedName>
</protein>
<gene>
    <name evidence="1" type="primary">hypA</name>
    <name type="ordered locus">azo3799</name>
</gene>
<keyword id="KW-0479">Metal-binding</keyword>
<keyword id="KW-0533">Nickel</keyword>
<keyword id="KW-1185">Reference proteome</keyword>
<keyword id="KW-0862">Zinc</keyword>
<sequence length="114" mass="12064">MHEMSLAEGIRGIVEDVARENGATRVARVVLEIGELASVEVEALRFCLDVVLKDSVADGAAVDIEAVPGSGWCMQCATVVPIAQRYDACPQCGGYQVQPTGGTEMRVKELALGD</sequence>
<evidence type="ECO:0000255" key="1">
    <source>
        <dbReference type="HAMAP-Rule" id="MF_00213"/>
    </source>
</evidence>